<sequence length="46" mass="4814">GAACLCKSDGPNTRGNSMSGTIWVFGCPSGWNNCEGRAIIGYCCKQ</sequence>
<dbReference type="PIR" id="A01796">
    <property type="entry name" value="TZAZ1"/>
</dbReference>
<dbReference type="PDB" id="1ATX">
    <property type="method" value="NMR"/>
    <property type="chains" value="A=1-46"/>
</dbReference>
<dbReference type="PDBsum" id="1ATX"/>
<dbReference type="BMRB" id="P01533"/>
<dbReference type="SMR" id="P01533"/>
<dbReference type="EvolutionaryTrace" id="P01533"/>
<dbReference type="GO" id="GO:0005576">
    <property type="term" value="C:extracellular region"/>
    <property type="evidence" value="ECO:0007669"/>
    <property type="project" value="UniProtKB-SubCell"/>
</dbReference>
<dbReference type="GO" id="GO:0042151">
    <property type="term" value="C:nematocyst"/>
    <property type="evidence" value="ECO:0007669"/>
    <property type="project" value="UniProtKB-SubCell"/>
</dbReference>
<dbReference type="GO" id="GO:0017080">
    <property type="term" value="F:sodium channel regulator activity"/>
    <property type="evidence" value="ECO:0007669"/>
    <property type="project" value="UniProtKB-KW"/>
</dbReference>
<dbReference type="GO" id="GO:0090729">
    <property type="term" value="F:toxin activity"/>
    <property type="evidence" value="ECO:0007669"/>
    <property type="project" value="UniProtKB-KW"/>
</dbReference>
<dbReference type="GO" id="GO:0009966">
    <property type="term" value="P:regulation of signal transduction"/>
    <property type="evidence" value="ECO:0007669"/>
    <property type="project" value="InterPro"/>
</dbReference>
<dbReference type="Gene3D" id="2.20.20.10">
    <property type="entry name" value="Anthopleurin-A"/>
    <property type="match status" value="1"/>
</dbReference>
<dbReference type="InterPro" id="IPR000693">
    <property type="entry name" value="Anenome_toxin"/>
</dbReference>
<dbReference type="InterPro" id="IPR023355">
    <property type="entry name" value="Myo_ane_neurotoxin_sf"/>
</dbReference>
<dbReference type="Pfam" id="PF00706">
    <property type="entry name" value="Toxin_4"/>
    <property type="match status" value="1"/>
</dbReference>
<dbReference type="PIRSF" id="PIRSF001905">
    <property type="entry name" value="Anenome_toxin"/>
    <property type="match status" value="1"/>
</dbReference>
<dbReference type="SUPFAM" id="SSF57392">
    <property type="entry name" value="Defensin-like"/>
    <property type="match status" value="1"/>
</dbReference>
<keyword id="KW-0002">3D-structure</keyword>
<keyword id="KW-0903">Direct protein sequencing</keyword>
<keyword id="KW-1015">Disulfide bond</keyword>
<keyword id="KW-0872">Ion channel impairing toxin</keyword>
<keyword id="KW-0166">Nematocyst</keyword>
<keyword id="KW-0528">Neurotoxin</keyword>
<keyword id="KW-0964">Secreted</keyword>
<keyword id="KW-0800">Toxin</keyword>
<keyword id="KW-0738">Voltage-gated sodium channel impairing toxin</keyword>
<proteinExistence type="evidence at protein level"/>
<name>NA11_ANESU</name>
<reference key="1">
    <citation type="journal article" date="1978" name="Eur. J. Biochem.">
        <title>Amino-acid sequence of toxin I from Anemonia sulcata.</title>
        <authorList>
            <person name="Wunderer G."/>
            <person name="Eulitz M."/>
        </authorList>
    </citation>
    <scope>PROTEIN SEQUENCE</scope>
    <source>
        <tissue>Nematoblast</tissue>
    </source>
</reference>
<reference key="2">
    <citation type="journal article" date="1985" name="Pflugers Arch.">
        <title>Anemonia sulcata toxins modify activation and inactivation of Na+ currents in a crayfish neurone.</title>
        <authorList>
            <person name="Hartung K."/>
            <person name="Rathmayer W."/>
        </authorList>
    </citation>
    <scope>FUNCTION</scope>
</reference>
<reference key="3">
    <citation type="journal article" date="2012" name="Toxicon">
        <title>Development of a rational nomenclature for naming peptide and protein toxins from sea anemones.</title>
        <authorList>
            <person name="Oliveira J.S."/>
            <person name="Fuentes-Silva D."/>
            <person name="King G.F."/>
        </authorList>
    </citation>
    <scope>NOMENCLATURE</scope>
</reference>
<reference key="4">
    <citation type="journal article" date="1988" name="Eur. J. Biochem.">
        <title>The secondary structure of the toxin ATX Ia from Anemonia sulcata in aqueous solution determined on the basis of complete sequence-specific 1H-NMR assignments.</title>
        <authorList>
            <person name="Widmer H."/>
            <person name="Wagner G."/>
            <person name="Schweitz H."/>
            <person name="Lazdunski M."/>
            <person name="Wuethrich K."/>
        </authorList>
    </citation>
    <scope>STRUCTURE BY NMR</scope>
    <scope>DISULFIDE BONDS</scope>
</reference>
<reference key="5">
    <citation type="journal article" date="1989" name="Proteins">
        <title>Three-dimensional structure of the neurotoxin ATX Ia from Anemonia sulcata in aqueous solution determined by nuclear magnetic resonance spectroscopy.</title>
        <authorList>
            <person name="Widmer H."/>
            <person name="Billeter M."/>
            <person name="Wuethrich K."/>
        </authorList>
    </citation>
    <scope>STRUCTURE BY NMR</scope>
    <scope>DISULFIDE BONDS</scope>
</reference>
<organism>
    <name type="scientific">Anemonia sulcata</name>
    <name type="common">Mediterranean snakelocks sea anemone</name>
    <dbReference type="NCBI Taxonomy" id="6108"/>
    <lineage>
        <taxon>Eukaryota</taxon>
        <taxon>Metazoa</taxon>
        <taxon>Cnidaria</taxon>
        <taxon>Anthozoa</taxon>
        <taxon>Hexacorallia</taxon>
        <taxon>Actiniaria</taxon>
        <taxon>Actiniidae</taxon>
        <taxon>Anemonia</taxon>
    </lineage>
</organism>
<accession>P01533</accession>
<feature type="chain" id="PRO_0000221512" description="Delta-actitoxin-Avd1a" evidence="3">
    <location>
        <begin position="1"/>
        <end position="46"/>
    </location>
</feature>
<feature type="disulfide bond" evidence="2">
    <location>
        <begin position="4"/>
        <end position="43"/>
    </location>
</feature>
<feature type="disulfide bond" evidence="2">
    <location>
        <begin position="6"/>
        <end position="34"/>
    </location>
</feature>
<feature type="disulfide bond" evidence="2">
    <location>
        <begin position="27"/>
        <end position="44"/>
    </location>
</feature>
<feature type="sequence variant" description="In about 20% of the molecules.">
    <original>A</original>
    <variation>P</variation>
    <location>
        <position position="3"/>
    </location>
</feature>
<feature type="strand" evidence="9">
    <location>
        <begin position="3"/>
        <end position="5"/>
    </location>
</feature>
<feature type="strand" evidence="9">
    <location>
        <begin position="16"/>
        <end position="25"/>
    </location>
</feature>
<feature type="strand" evidence="9">
    <location>
        <begin position="32"/>
        <end position="34"/>
    </location>
</feature>
<feature type="strand" evidence="9">
    <location>
        <begin position="37"/>
        <end position="45"/>
    </location>
</feature>
<comment type="function">
    <text evidence="1">Binds specifically to voltage-gated sodium channels (Nav) and delays their inactivation during signal transduction (when tested on the soma membrane of a crustacean neuron). Has also been observed to affect the activation of the sodium current.</text>
</comment>
<comment type="subcellular location">
    <subcellularLocation>
        <location evidence="8">Secreted</location>
    </subcellularLocation>
    <subcellularLocation>
        <location evidence="8">Nematocyst</location>
    </subcellularLocation>
</comment>
<comment type="miscellaneous">
    <text evidence="1">Negative results: does not have effect on potassium or calcium currents with concentrations up to 5 uM (PubMed:2409523). Is inactive at excitable membranes of frog (PubMed:2409523).</text>
</comment>
<comment type="similarity">
    <text evidence="8">Belongs to the sea anemone sodium channel inhibitory toxin family. Type I subfamily.</text>
</comment>
<comment type="caution">
    <text evidence="8">Opinions are divided on whether Anemonia viridis (Forsskal, 1775) and Anemonia sulcata (Pennant, 1777) are separate species.</text>
</comment>
<protein>
    <recommendedName>
        <fullName evidence="4">Delta-actitoxin-Avd1a</fullName>
        <shortName evidence="4">Delta-AITX-Avd1a</shortName>
    </recommendedName>
    <alternativeName>
        <fullName>As1</fullName>
    </alternativeName>
    <alternativeName>
        <fullName evidence="4">Delta-actitoxin-Avd1b</fullName>
        <shortName evidence="4">Delta-AITX-Avd1b</shortName>
    </alternativeName>
    <alternativeName>
        <fullName evidence="6">Toxin ATX-I</fullName>
        <shortName evidence="5">ATX I</shortName>
    </alternativeName>
    <alternativeName>
        <fullName evidence="7">Toxin-1</fullName>
    </alternativeName>
</protein>
<evidence type="ECO:0000269" key="1">
    <source>
    </source>
</evidence>
<evidence type="ECO:0000269" key="2">
    <source>
    </source>
</evidence>
<evidence type="ECO:0000269" key="3">
    <source>
    </source>
</evidence>
<evidence type="ECO:0000303" key="4">
    <source>
    </source>
</evidence>
<evidence type="ECO:0000303" key="5">
    <source>
    </source>
</evidence>
<evidence type="ECO:0000303" key="6">
    <source>
    </source>
</evidence>
<evidence type="ECO:0000303" key="7">
    <source>
    </source>
</evidence>
<evidence type="ECO:0000305" key="8"/>
<evidence type="ECO:0007829" key="9">
    <source>
        <dbReference type="PDB" id="1ATX"/>
    </source>
</evidence>